<protein>
    <recommendedName>
        <fullName>Coiled-coil domain-containing protein 71</fullName>
    </recommendedName>
</protein>
<feature type="chain" id="PRO_0000234421" description="Coiled-coil domain-containing protein 71">
    <location>
        <begin position="1"/>
        <end position="467"/>
    </location>
</feature>
<feature type="region of interest" description="Disordered" evidence="2">
    <location>
        <begin position="81"/>
        <end position="105"/>
    </location>
</feature>
<feature type="region of interest" description="Disordered" evidence="2">
    <location>
        <begin position="211"/>
        <end position="280"/>
    </location>
</feature>
<feature type="region of interest" description="Disordered" evidence="2">
    <location>
        <begin position="349"/>
        <end position="416"/>
    </location>
</feature>
<feature type="coiled-coil region" evidence="1">
    <location>
        <begin position="279"/>
        <end position="359"/>
    </location>
</feature>
<feature type="compositionally biased region" description="Low complexity" evidence="2">
    <location>
        <begin position="88"/>
        <end position="105"/>
    </location>
</feature>
<feature type="compositionally biased region" description="Polar residues" evidence="2">
    <location>
        <begin position="253"/>
        <end position="265"/>
    </location>
</feature>
<feature type="compositionally biased region" description="Basic residues" evidence="2">
    <location>
        <begin position="349"/>
        <end position="380"/>
    </location>
</feature>
<feature type="compositionally biased region" description="Basic and acidic residues" evidence="2">
    <location>
        <begin position="392"/>
        <end position="401"/>
    </location>
</feature>
<feature type="modified residue" description="Phosphoserine" evidence="6">
    <location>
        <position position="129"/>
    </location>
</feature>
<feature type="sequence variant" id="VAR_026236" description="In dbSNP:rs4955419." evidence="3 4">
    <original>Q</original>
    <variation>L</variation>
    <location>
        <position position="317"/>
    </location>
</feature>
<feature type="sequence variant" id="VAR_026237" description="In dbSNP:rs4955418." evidence="3 4">
    <original>W</original>
    <variation>R</variation>
    <location>
        <position position="339"/>
    </location>
</feature>
<sequence>MSVVVQHVEEKAVHSWSRISTAGKKALEEALLVFNPMSQDLSATEAQLVAFLQGLRDDGFQPTILRSGDVYGYSSCTANPPSQTKLQARAPNPTATSPPASAPRTAMRLPAGRATLLPMPLSGRLAKASTPALAKHATTNLLLSSLKQSSASHARGAAVGFPTHLYPGVYPAMRLSVVLEALVPLKTPMPCLGAKHKAQSLQLSLADSPLKLRKSSGKGPGNPRPKAPRKTTSKGPKCLTRKGPGAGPRRGSGHQSKTNRATGSPSVRRMKGGSALGTKTAQAKVARTLAKAARAQAKVARTQAKAAKARAKAKAAQVKAKAKAKAAQVKAKAKVMAAWAKAKAKAKAVRAKAKVARTQPRGRGRPKGSAKARTTRKGQKNRPETVGQKRKRAEEAKDLPPKKRTRLGPRSPKAWLGPGTAKLLKFRAIKVDRRSSDDEVRQRAQRILRVNLSPVIRLQPLLPYSAV</sequence>
<evidence type="ECO:0000255" key="1"/>
<evidence type="ECO:0000256" key="2">
    <source>
        <dbReference type="SAM" id="MobiDB-lite"/>
    </source>
</evidence>
<evidence type="ECO:0000269" key="3">
    <source>
    </source>
</evidence>
<evidence type="ECO:0000269" key="4">
    <source>
    </source>
</evidence>
<evidence type="ECO:0000305" key="5"/>
<evidence type="ECO:0007744" key="6">
    <source>
    </source>
</evidence>
<proteinExistence type="evidence at protein level"/>
<gene>
    <name type="primary">CCDC71</name>
</gene>
<dbReference type="EMBL" id="AK022862">
    <property type="protein sequence ID" value="BAB14278.1"/>
    <property type="molecule type" value="mRNA"/>
</dbReference>
<dbReference type="EMBL" id="AK023691">
    <property type="protein sequence ID" value="BAB14642.1"/>
    <property type="status" value="ALT_INIT"/>
    <property type="molecule type" value="mRNA"/>
</dbReference>
<dbReference type="EMBL" id="AC135506">
    <property type="status" value="NOT_ANNOTATED_CDS"/>
    <property type="molecule type" value="Genomic_DNA"/>
</dbReference>
<dbReference type="EMBL" id="BC035516">
    <property type="protein sequence ID" value="AAH35516.1"/>
    <property type="molecule type" value="mRNA"/>
</dbReference>
<dbReference type="EMBL" id="BC071960">
    <property type="protein sequence ID" value="AAH71960.1"/>
    <property type="molecule type" value="mRNA"/>
</dbReference>
<dbReference type="CCDS" id="CCDS2790.1"/>
<dbReference type="RefSeq" id="NP_075054.3">
    <property type="nucleotide sequence ID" value="NM_022903.3"/>
</dbReference>
<dbReference type="SMR" id="Q8IV32"/>
<dbReference type="BioGRID" id="122347">
    <property type="interactions" value="74"/>
</dbReference>
<dbReference type="FunCoup" id="Q8IV32">
    <property type="interactions" value="979"/>
</dbReference>
<dbReference type="IntAct" id="Q8IV32">
    <property type="interactions" value="34"/>
</dbReference>
<dbReference type="STRING" id="9606.ENSP00000319006"/>
<dbReference type="iPTMnet" id="Q8IV32"/>
<dbReference type="PhosphoSitePlus" id="Q8IV32"/>
<dbReference type="BioMuta" id="CCDC71"/>
<dbReference type="DMDM" id="317373459"/>
<dbReference type="jPOST" id="Q8IV32"/>
<dbReference type="MassIVE" id="Q8IV32"/>
<dbReference type="PaxDb" id="9606-ENSP00000319006"/>
<dbReference type="PeptideAtlas" id="Q8IV32"/>
<dbReference type="ProteomicsDB" id="70646"/>
<dbReference type="Antibodypedia" id="56320">
    <property type="antibodies" value="62 antibodies from 15 providers"/>
</dbReference>
<dbReference type="DNASU" id="64925"/>
<dbReference type="Ensembl" id="ENST00000321895.7">
    <property type="protein sequence ID" value="ENSP00000319006.6"/>
    <property type="gene ID" value="ENSG00000177352.10"/>
</dbReference>
<dbReference type="GeneID" id="64925"/>
<dbReference type="KEGG" id="hsa:64925"/>
<dbReference type="MANE-Select" id="ENST00000321895.7">
    <property type="protein sequence ID" value="ENSP00000319006.6"/>
    <property type="RefSeq nucleotide sequence ID" value="NM_022903.4"/>
    <property type="RefSeq protein sequence ID" value="NP_075054.3"/>
</dbReference>
<dbReference type="UCSC" id="uc003cwg.5">
    <property type="organism name" value="human"/>
</dbReference>
<dbReference type="AGR" id="HGNC:25760"/>
<dbReference type="CTD" id="64925"/>
<dbReference type="DisGeNET" id="64925"/>
<dbReference type="GeneCards" id="CCDC71"/>
<dbReference type="HGNC" id="HGNC:25760">
    <property type="gene designation" value="CCDC71"/>
</dbReference>
<dbReference type="HPA" id="ENSG00000177352">
    <property type="expression patterns" value="Low tissue specificity"/>
</dbReference>
<dbReference type="neXtProt" id="NX_Q8IV32"/>
<dbReference type="OpenTargets" id="ENSG00000177352"/>
<dbReference type="PharmGKB" id="PA143485422"/>
<dbReference type="VEuPathDB" id="HostDB:ENSG00000177352"/>
<dbReference type="eggNOG" id="ENOG502RY9H">
    <property type="taxonomic scope" value="Eukaryota"/>
</dbReference>
<dbReference type="GeneTree" id="ENSGT00940000155306"/>
<dbReference type="HOGENOM" id="CLU_049410_1_0_1"/>
<dbReference type="InParanoid" id="Q8IV32"/>
<dbReference type="OMA" id="CPETVGQ"/>
<dbReference type="OrthoDB" id="8522252at2759"/>
<dbReference type="PAN-GO" id="Q8IV32">
    <property type="GO annotations" value="0 GO annotations based on evolutionary models"/>
</dbReference>
<dbReference type="PhylomeDB" id="Q8IV32"/>
<dbReference type="TreeFam" id="TF336191"/>
<dbReference type="PathwayCommons" id="Q8IV32"/>
<dbReference type="SignaLink" id="Q8IV32"/>
<dbReference type="BioGRID-ORCS" id="64925">
    <property type="hits" value="11 hits in 1158 CRISPR screens"/>
</dbReference>
<dbReference type="ChiTaRS" id="CCDC71">
    <property type="organism name" value="human"/>
</dbReference>
<dbReference type="GenomeRNAi" id="64925"/>
<dbReference type="Pharos" id="Q8IV32">
    <property type="development level" value="Tdark"/>
</dbReference>
<dbReference type="PRO" id="PR:Q8IV32"/>
<dbReference type="Proteomes" id="UP000005640">
    <property type="component" value="Chromosome 3"/>
</dbReference>
<dbReference type="RNAct" id="Q8IV32">
    <property type="molecule type" value="protein"/>
</dbReference>
<dbReference type="Bgee" id="ENSG00000177352">
    <property type="expression patterns" value="Expressed in stromal cell of endometrium and 107 other cell types or tissues"/>
</dbReference>
<dbReference type="InterPro" id="IPR026695">
    <property type="entry name" value="Ccdc71/71L"/>
</dbReference>
<dbReference type="PANTHER" id="PTHR14484">
    <property type="entry name" value="COILED-COIL DOMAIN-CONTAINING PROTEIN 71"/>
    <property type="match status" value="1"/>
</dbReference>
<dbReference type="PANTHER" id="PTHR14484:SF0">
    <property type="entry name" value="COILED-COIL DOMAIN-CONTAINING PROTEIN 71"/>
    <property type="match status" value="1"/>
</dbReference>
<dbReference type="Pfam" id="PF15374">
    <property type="entry name" value="CCDC71L"/>
    <property type="match status" value="2"/>
</dbReference>
<comment type="sequence caution" evidence="5">
    <conflict type="erroneous initiation">
        <sequence resource="EMBL-CDS" id="BAB14642"/>
    </conflict>
    <text>Truncated N-terminus.</text>
</comment>
<organism>
    <name type="scientific">Homo sapiens</name>
    <name type="common">Human</name>
    <dbReference type="NCBI Taxonomy" id="9606"/>
    <lineage>
        <taxon>Eukaryota</taxon>
        <taxon>Metazoa</taxon>
        <taxon>Chordata</taxon>
        <taxon>Craniata</taxon>
        <taxon>Vertebrata</taxon>
        <taxon>Euteleostomi</taxon>
        <taxon>Mammalia</taxon>
        <taxon>Eutheria</taxon>
        <taxon>Euarchontoglires</taxon>
        <taxon>Primates</taxon>
        <taxon>Haplorrhini</taxon>
        <taxon>Catarrhini</taxon>
        <taxon>Hominidae</taxon>
        <taxon>Homo</taxon>
    </lineage>
</organism>
<name>CCD71_HUMAN</name>
<keyword id="KW-0175">Coiled coil</keyword>
<keyword id="KW-0597">Phosphoprotein</keyword>
<keyword id="KW-1267">Proteomics identification</keyword>
<keyword id="KW-1185">Reference proteome</keyword>
<accession>Q8IV32</accession>
<accession>Q6IPE2</accession>
<accession>Q9H8H4</accession>
<accession>Q9H9F1</accession>
<reference key="1">
    <citation type="journal article" date="2004" name="Nat. Genet.">
        <title>Complete sequencing and characterization of 21,243 full-length human cDNAs.</title>
        <authorList>
            <person name="Ota T."/>
            <person name="Suzuki Y."/>
            <person name="Nishikawa T."/>
            <person name="Otsuki T."/>
            <person name="Sugiyama T."/>
            <person name="Irie R."/>
            <person name="Wakamatsu A."/>
            <person name="Hayashi K."/>
            <person name="Sato H."/>
            <person name="Nagai K."/>
            <person name="Kimura K."/>
            <person name="Makita H."/>
            <person name="Sekine M."/>
            <person name="Obayashi M."/>
            <person name="Nishi T."/>
            <person name="Shibahara T."/>
            <person name="Tanaka T."/>
            <person name="Ishii S."/>
            <person name="Yamamoto J."/>
            <person name="Saito K."/>
            <person name="Kawai Y."/>
            <person name="Isono Y."/>
            <person name="Nakamura Y."/>
            <person name="Nagahari K."/>
            <person name="Murakami K."/>
            <person name="Yasuda T."/>
            <person name="Iwayanagi T."/>
            <person name="Wagatsuma M."/>
            <person name="Shiratori A."/>
            <person name="Sudo H."/>
            <person name="Hosoiri T."/>
            <person name="Kaku Y."/>
            <person name="Kodaira H."/>
            <person name="Kondo H."/>
            <person name="Sugawara M."/>
            <person name="Takahashi M."/>
            <person name="Kanda K."/>
            <person name="Yokoi T."/>
            <person name="Furuya T."/>
            <person name="Kikkawa E."/>
            <person name="Omura Y."/>
            <person name="Abe K."/>
            <person name="Kamihara K."/>
            <person name="Katsuta N."/>
            <person name="Sato K."/>
            <person name="Tanikawa M."/>
            <person name="Yamazaki M."/>
            <person name="Ninomiya K."/>
            <person name="Ishibashi T."/>
            <person name="Yamashita H."/>
            <person name="Murakawa K."/>
            <person name="Fujimori K."/>
            <person name="Tanai H."/>
            <person name="Kimata M."/>
            <person name="Watanabe M."/>
            <person name="Hiraoka S."/>
            <person name="Chiba Y."/>
            <person name="Ishida S."/>
            <person name="Ono Y."/>
            <person name="Takiguchi S."/>
            <person name="Watanabe S."/>
            <person name="Yosida M."/>
            <person name="Hotuta T."/>
            <person name="Kusano J."/>
            <person name="Kanehori K."/>
            <person name="Takahashi-Fujii A."/>
            <person name="Hara H."/>
            <person name="Tanase T.-O."/>
            <person name="Nomura Y."/>
            <person name="Togiya S."/>
            <person name="Komai F."/>
            <person name="Hara R."/>
            <person name="Takeuchi K."/>
            <person name="Arita M."/>
            <person name="Imose N."/>
            <person name="Musashino K."/>
            <person name="Yuuki H."/>
            <person name="Oshima A."/>
            <person name="Sasaki N."/>
            <person name="Aotsuka S."/>
            <person name="Yoshikawa Y."/>
            <person name="Matsunawa H."/>
            <person name="Ichihara T."/>
            <person name="Shiohata N."/>
            <person name="Sano S."/>
            <person name="Moriya S."/>
            <person name="Momiyama H."/>
            <person name="Satoh N."/>
            <person name="Takami S."/>
            <person name="Terashima Y."/>
            <person name="Suzuki O."/>
            <person name="Nakagawa S."/>
            <person name="Senoh A."/>
            <person name="Mizoguchi H."/>
            <person name="Goto Y."/>
            <person name="Shimizu F."/>
            <person name="Wakebe H."/>
            <person name="Hishigaki H."/>
            <person name="Watanabe T."/>
            <person name="Sugiyama A."/>
            <person name="Takemoto M."/>
            <person name="Kawakami B."/>
            <person name="Yamazaki M."/>
            <person name="Watanabe K."/>
            <person name="Kumagai A."/>
            <person name="Itakura S."/>
            <person name="Fukuzumi Y."/>
            <person name="Fujimori Y."/>
            <person name="Komiyama M."/>
            <person name="Tashiro H."/>
            <person name="Tanigami A."/>
            <person name="Fujiwara T."/>
            <person name="Ono T."/>
            <person name="Yamada K."/>
            <person name="Fujii Y."/>
            <person name="Ozaki K."/>
            <person name="Hirao M."/>
            <person name="Ohmori Y."/>
            <person name="Kawabata A."/>
            <person name="Hikiji T."/>
            <person name="Kobatake N."/>
            <person name="Inagaki H."/>
            <person name="Ikema Y."/>
            <person name="Okamoto S."/>
            <person name="Okitani R."/>
            <person name="Kawakami T."/>
            <person name="Noguchi S."/>
            <person name="Itoh T."/>
            <person name="Shigeta K."/>
            <person name="Senba T."/>
            <person name="Matsumura K."/>
            <person name="Nakajima Y."/>
            <person name="Mizuno T."/>
            <person name="Morinaga M."/>
            <person name="Sasaki M."/>
            <person name="Togashi T."/>
            <person name="Oyama M."/>
            <person name="Hata H."/>
            <person name="Watanabe M."/>
            <person name="Komatsu T."/>
            <person name="Mizushima-Sugano J."/>
            <person name="Satoh T."/>
            <person name="Shirai Y."/>
            <person name="Takahashi Y."/>
            <person name="Nakagawa K."/>
            <person name="Okumura K."/>
            <person name="Nagase T."/>
            <person name="Nomura N."/>
            <person name="Kikuchi H."/>
            <person name="Masuho Y."/>
            <person name="Yamashita R."/>
            <person name="Nakai K."/>
            <person name="Yada T."/>
            <person name="Nakamura Y."/>
            <person name="Ohara O."/>
            <person name="Isogai T."/>
            <person name="Sugano S."/>
        </authorList>
    </citation>
    <scope>NUCLEOTIDE SEQUENCE [LARGE SCALE MRNA]</scope>
    <scope>VARIANTS LEU-317 AND ARG-339</scope>
    <source>
        <tissue>Placenta</tissue>
    </source>
</reference>
<reference key="2">
    <citation type="journal article" date="2006" name="Nature">
        <title>The DNA sequence, annotation and analysis of human chromosome 3.</title>
        <authorList>
            <person name="Muzny D.M."/>
            <person name="Scherer S.E."/>
            <person name="Kaul R."/>
            <person name="Wang J."/>
            <person name="Yu J."/>
            <person name="Sudbrak R."/>
            <person name="Buhay C.J."/>
            <person name="Chen R."/>
            <person name="Cree A."/>
            <person name="Ding Y."/>
            <person name="Dugan-Rocha S."/>
            <person name="Gill R."/>
            <person name="Gunaratne P."/>
            <person name="Harris R.A."/>
            <person name="Hawes A.C."/>
            <person name="Hernandez J."/>
            <person name="Hodgson A.V."/>
            <person name="Hume J."/>
            <person name="Jackson A."/>
            <person name="Khan Z.M."/>
            <person name="Kovar-Smith C."/>
            <person name="Lewis L.R."/>
            <person name="Lozado R.J."/>
            <person name="Metzker M.L."/>
            <person name="Milosavljevic A."/>
            <person name="Miner G.R."/>
            <person name="Morgan M.B."/>
            <person name="Nazareth L.V."/>
            <person name="Scott G."/>
            <person name="Sodergren E."/>
            <person name="Song X.-Z."/>
            <person name="Steffen D."/>
            <person name="Wei S."/>
            <person name="Wheeler D.A."/>
            <person name="Wright M.W."/>
            <person name="Worley K.C."/>
            <person name="Yuan Y."/>
            <person name="Zhang Z."/>
            <person name="Adams C.Q."/>
            <person name="Ansari-Lari M.A."/>
            <person name="Ayele M."/>
            <person name="Brown M.J."/>
            <person name="Chen G."/>
            <person name="Chen Z."/>
            <person name="Clendenning J."/>
            <person name="Clerc-Blankenburg K.P."/>
            <person name="Chen R."/>
            <person name="Chen Z."/>
            <person name="Davis C."/>
            <person name="Delgado O."/>
            <person name="Dinh H.H."/>
            <person name="Dong W."/>
            <person name="Draper H."/>
            <person name="Ernst S."/>
            <person name="Fu G."/>
            <person name="Gonzalez-Garay M.L."/>
            <person name="Garcia D.K."/>
            <person name="Gillett W."/>
            <person name="Gu J."/>
            <person name="Hao B."/>
            <person name="Haugen E."/>
            <person name="Havlak P."/>
            <person name="He X."/>
            <person name="Hennig S."/>
            <person name="Hu S."/>
            <person name="Huang W."/>
            <person name="Jackson L.R."/>
            <person name="Jacob L.S."/>
            <person name="Kelly S.H."/>
            <person name="Kube M."/>
            <person name="Levy R."/>
            <person name="Li Z."/>
            <person name="Liu B."/>
            <person name="Liu J."/>
            <person name="Liu W."/>
            <person name="Lu J."/>
            <person name="Maheshwari M."/>
            <person name="Nguyen B.-V."/>
            <person name="Okwuonu G.O."/>
            <person name="Palmeiri A."/>
            <person name="Pasternak S."/>
            <person name="Perez L.M."/>
            <person name="Phelps K.A."/>
            <person name="Plopper F.J."/>
            <person name="Qiang B."/>
            <person name="Raymond C."/>
            <person name="Rodriguez R."/>
            <person name="Saenphimmachak C."/>
            <person name="Santibanez J."/>
            <person name="Shen H."/>
            <person name="Shen Y."/>
            <person name="Subramanian S."/>
            <person name="Tabor P.E."/>
            <person name="Verduzco D."/>
            <person name="Waldron L."/>
            <person name="Wang J."/>
            <person name="Wang J."/>
            <person name="Wang Q."/>
            <person name="Williams G.A."/>
            <person name="Wong G.K.-S."/>
            <person name="Yao Z."/>
            <person name="Zhang J."/>
            <person name="Zhang X."/>
            <person name="Zhao G."/>
            <person name="Zhou J."/>
            <person name="Zhou Y."/>
            <person name="Nelson D."/>
            <person name="Lehrach H."/>
            <person name="Reinhardt R."/>
            <person name="Naylor S.L."/>
            <person name="Yang H."/>
            <person name="Olson M."/>
            <person name="Weinstock G."/>
            <person name="Gibbs R.A."/>
        </authorList>
    </citation>
    <scope>NUCLEOTIDE SEQUENCE [LARGE SCALE GENOMIC DNA]</scope>
</reference>
<reference key="3">
    <citation type="journal article" date="2004" name="Genome Res.">
        <title>The status, quality, and expansion of the NIH full-length cDNA project: the Mammalian Gene Collection (MGC).</title>
        <authorList>
            <consortium name="The MGC Project Team"/>
        </authorList>
    </citation>
    <scope>NUCLEOTIDE SEQUENCE [LARGE SCALE MRNA]</scope>
    <scope>VARIANTS LEU-317 AND ARG-339</scope>
    <source>
        <tissue>Ovary</tissue>
        <tissue>Pancreas</tissue>
    </source>
</reference>
<reference key="4">
    <citation type="journal article" date="2013" name="J. Proteome Res.">
        <title>Toward a comprehensive characterization of a human cancer cell phosphoproteome.</title>
        <authorList>
            <person name="Zhou H."/>
            <person name="Di Palma S."/>
            <person name="Preisinger C."/>
            <person name="Peng M."/>
            <person name="Polat A.N."/>
            <person name="Heck A.J."/>
            <person name="Mohammed S."/>
        </authorList>
    </citation>
    <scope>PHOSPHORYLATION [LARGE SCALE ANALYSIS] AT SER-129</scope>
    <scope>IDENTIFICATION BY MASS SPECTROMETRY [LARGE SCALE ANALYSIS]</scope>
    <source>
        <tissue>Erythroleukemia</tissue>
    </source>
</reference>